<name>CATA_PICAN</name>
<reference key="1">
    <citation type="journal article" date="1992" name="FEBS Lett.">
        <title>Targeting signal of the peroxisomal catalase in the methylotrophic yeast Hansenula polymorpha.</title>
        <authorList>
            <person name="Didion T."/>
            <person name="Roggenkamp R.O."/>
        </authorList>
    </citation>
    <scope>NUCLEOTIDE SEQUENCE [GENOMIC DNA]</scope>
    <source>
        <strain>ATCC 34438 / CBS 4732 / DSM 70277 / JCM 3621 / NBRC 1476 / NRRL Y-5445</strain>
    </source>
</reference>
<keyword id="KW-0002">3D-structure</keyword>
<keyword id="KW-0349">Heme</keyword>
<keyword id="KW-0376">Hydrogen peroxide</keyword>
<keyword id="KW-0408">Iron</keyword>
<keyword id="KW-0479">Metal-binding</keyword>
<keyword id="KW-0560">Oxidoreductase</keyword>
<keyword id="KW-0575">Peroxidase</keyword>
<keyword id="KW-0576">Peroxisome</keyword>
<organism>
    <name type="scientific">Pichia angusta</name>
    <name type="common">Yeast</name>
    <name type="synonym">Hansenula polymorpha</name>
    <dbReference type="NCBI Taxonomy" id="870730"/>
    <lineage>
        <taxon>Eukaryota</taxon>
        <taxon>Fungi</taxon>
        <taxon>Dikarya</taxon>
        <taxon>Ascomycota</taxon>
        <taxon>Saccharomycotina</taxon>
        <taxon>Pichiomycetes</taxon>
        <taxon>Pichiales</taxon>
        <taxon>Pichiaceae</taxon>
        <taxon>Ogataea</taxon>
    </lineage>
</organism>
<proteinExistence type="evidence at protein level"/>
<evidence type="ECO:0000250" key="1">
    <source>
        <dbReference type="UniProtKB" id="P04040"/>
    </source>
</evidence>
<evidence type="ECO:0000250" key="2">
    <source>
        <dbReference type="UniProtKB" id="P15202"/>
    </source>
</evidence>
<evidence type="ECO:0000255" key="3"/>
<evidence type="ECO:0000255" key="4">
    <source>
        <dbReference type="PROSITE-ProRule" id="PRU10013"/>
    </source>
</evidence>
<evidence type="ECO:0000305" key="5"/>
<evidence type="ECO:0007829" key="6">
    <source>
        <dbReference type="PDB" id="2XQ1"/>
    </source>
</evidence>
<protein>
    <recommendedName>
        <fullName>Peroxisomal catalase</fullName>
        <ecNumber evidence="4">1.11.1.6</ecNumber>
    </recommendedName>
</protein>
<sequence>MSNPPVFTTSQGCPVSDPFTTQRIPLDSTGYKYAPPIGPLLLQDFKLIDTLSHFDRERIPERVVHAKGAGAYGVFEVTDDITDVCSAKFLDTVGKKTRIFTRFSTVGGEKGSADTARDPRGFATKFYTEDGNLDLVYNNTPIFFIRDPIKFPHFIHTQKRNPATNLKDPNMFWDYLTANDESLHQVMYLFSNRGTPASYRTMNGYSGHTYKWYNSKGEWVYVQVHFIANQGVHNLLDEEAGRLAGEDPDHSTRDLWEAIEKGDYPSWECYIQTMTLEQSKKLPFSVFDLTKVWPHKDFPLRHFGRFTLNENPKNYYAETEQIAFSPSHTVPGMEPSNDPVLQSRLFSYPDTHRHRLGPNYHQIPVNCPLKSGSFNPINRDGPMCVDGNLGGTPNYANAYNCPIQYAVSPKASGNKPDEKYTGEVVPYHWEHTDYDYFQPKMFWKVLGRTPGEQESLVKNVANHVSAADEFIQDRVYEYFSKAEPIIGDLIRKKVQELKRKASSPSKI</sequence>
<accession>P30263</accession>
<dbReference type="EC" id="1.11.1.6" evidence="4"/>
<dbReference type="EMBL" id="X56501">
    <property type="protein sequence ID" value="CAA39856.1"/>
    <property type="molecule type" value="Genomic_DNA"/>
</dbReference>
<dbReference type="PIR" id="S23422">
    <property type="entry name" value="S23422"/>
</dbReference>
<dbReference type="PDB" id="2XQ1">
    <property type="method" value="X-ray"/>
    <property type="resolution" value="2.90 A"/>
    <property type="chains" value="A/B/C/D/E/F/G/H/I/J/K/L/M/N/O/P=1-507"/>
</dbReference>
<dbReference type="PDBsum" id="2XQ1"/>
<dbReference type="SMR" id="P30263"/>
<dbReference type="PeroxiBase" id="5260">
    <property type="entry name" value="PangKat01"/>
</dbReference>
<dbReference type="PhylomeDB" id="P30263"/>
<dbReference type="EvolutionaryTrace" id="P30263"/>
<dbReference type="GO" id="GO:0005739">
    <property type="term" value="C:mitochondrion"/>
    <property type="evidence" value="ECO:0007669"/>
    <property type="project" value="TreeGrafter"/>
</dbReference>
<dbReference type="GO" id="GO:0005782">
    <property type="term" value="C:peroxisomal matrix"/>
    <property type="evidence" value="ECO:0007669"/>
    <property type="project" value="UniProtKB-SubCell"/>
</dbReference>
<dbReference type="GO" id="GO:0004096">
    <property type="term" value="F:catalase activity"/>
    <property type="evidence" value="ECO:0007669"/>
    <property type="project" value="UniProtKB-EC"/>
</dbReference>
<dbReference type="GO" id="GO:0020037">
    <property type="term" value="F:heme binding"/>
    <property type="evidence" value="ECO:0007669"/>
    <property type="project" value="InterPro"/>
</dbReference>
<dbReference type="GO" id="GO:0046872">
    <property type="term" value="F:metal ion binding"/>
    <property type="evidence" value="ECO:0007669"/>
    <property type="project" value="UniProtKB-KW"/>
</dbReference>
<dbReference type="GO" id="GO:0042744">
    <property type="term" value="P:hydrogen peroxide catabolic process"/>
    <property type="evidence" value="ECO:0007669"/>
    <property type="project" value="UniProtKB-KW"/>
</dbReference>
<dbReference type="GO" id="GO:0042542">
    <property type="term" value="P:response to hydrogen peroxide"/>
    <property type="evidence" value="ECO:0007669"/>
    <property type="project" value="TreeGrafter"/>
</dbReference>
<dbReference type="CDD" id="cd08157">
    <property type="entry name" value="catalase_fungal"/>
    <property type="match status" value="1"/>
</dbReference>
<dbReference type="FunFam" id="2.40.180.10:FF:000001">
    <property type="entry name" value="Catalase"/>
    <property type="match status" value="1"/>
</dbReference>
<dbReference type="Gene3D" id="2.40.180.10">
    <property type="entry name" value="Catalase core domain"/>
    <property type="match status" value="1"/>
</dbReference>
<dbReference type="InterPro" id="IPR018028">
    <property type="entry name" value="Catalase"/>
</dbReference>
<dbReference type="InterPro" id="IPR024708">
    <property type="entry name" value="Catalase_AS"/>
</dbReference>
<dbReference type="InterPro" id="IPR024711">
    <property type="entry name" value="Catalase_clade1/3"/>
</dbReference>
<dbReference type="InterPro" id="IPR011614">
    <property type="entry name" value="Catalase_core"/>
</dbReference>
<dbReference type="InterPro" id="IPR002226">
    <property type="entry name" value="Catalase_haem_BS"/>
</dbReference>
<dbReference type="InterPro" id="IPR010582">
    <property type="entry name" value="Catalase_immune_responsive"/>
</dbReference>
<dbReference type="InterPro" id="IPR020835">
    <property type="entry name" value="Catalase_sf"/>
</dbReference>
<dbReference type="PANTHER" id="PTHR11465">
    <property type="entry name" value="CATALASE"/>
    <property type="match status" value="1"/>
</dbReference>
<dbReference type="PANTHER" id="PTHR11465:SF9">
    <property type="entry name" value="CATALASE"/>
    <property type="match status" value="1"/>
</dbReference>
<dbReference type="Pfam" id="PF00199">
    <property type="entry name" value="Catalase"/>
    <property type="match status" value="1"/>
</dbReference>
<dbReference type="Pfam" id="PF06628">
    <property type="entry name" value="Catalase-rel"/>
    <property type="match status" value="1"/>
</dbReference>
<dbReference type="PIRSF" id="PIRSF038928">
    <property type="entry name" value="Catalase_clade1-3"/>
    <property type="match status" value="1"/>
</dbReference>
<dbReference type="PRINTS" id="PR00067">
    <property type="entry name" value="CATALASE"/>
</dbReference>
<dbReference type="SMART" id="SM01060">
    <property type="entry name" value="Catalase"/>
    <property type="match status" value="1"/>
</dbReference>
<dbReference type="SUPFAM" id="SSF56634">
    <property type="entry name" value="Heme-dependent catalase-like"/>
    <property type="match status" value="1"/>
</dbReference>
<dbReference type="PROSITE" id="PS00437">
    <property type="entry name" value="CATALASE_1"/>
    <property type="match status" value="1"/>
</dbReference>
<dbReference type="PROSITE" id="PS00438">
    <property type="entry name" value="CATALASE_2"/>
    <property type="match status" value="1"/>
</dbReference>
<dbReference type="PROSITE" id="PS51402">
    <property type="entry name" value="CATALASE_3"/>
    <property type="match status" value="1"/>
</dbReference>
<comment type="function">
    <text evidence="1">Catalyzes the degradation of hydrogen peroxide (H(2)O(2)) generated by peroxisomal oxidases to water and oxygen, thereby protecting cells from the toxic effects of hydrogen peroxide.</text>
</comment>
<comment type="catalytic activity">
    <reaction evidence="4">
        <text>2 H2O2 = O2 + 2 H2O</text>
        <dbReference type="Rhea" id="RHEA:20309"/>
        <dbReference type="ChEBI" id="CHEBI:15377"/>
        <dbReference type="ChEBI" id="CHEBI:15379"/>
        <dbReference type="ChEBI" id="CHEBI:16240"/>
        <dbReference type="EC" id="1.11.1.6"/>
    </reaction>
</comment>
<comment type="cofactor">
    <cofactor evidence="2">
        <name>heme</name>
        <dbReference type="ChEBI" id="CHEBI:30413"/>
    </cofactor>
</comment>
<comment type="subunit">
    <text>Homotetramer.</text>
</comment>
<comment type="subcellular location">
    <subcellularLocation>
        <location evidence="2">Peroxisome matrix</location>
    </subcellularLocation>
</comment>
<comment type="similarity">
    <text evidence="5">Belongs to the catalase family.</text>
</comment>
<feature type="chain" id="PRO_0000084926" description="Peroxisomal catalase">
    <location>
        <begin position="1"/>
        <end position="507"/>
    </location>
</feature>
<feature type="short sequence motif" description="Microbody targeting signal" evidence="3">
    <location>
        <begin position="505"/>
        <end position="507"/>
    </location>
</feature>
<feature type="active site" evidence="4">
    <location>
        <position position="65"/>
    </location>
</feature>
<feature type="active site" evidence="4">
    <location>
        <position position="138"/>
    </location>
</feature>
<feature type="binding site" description="axial binding residue" evidence="1">
    <location>
        <position position="348"/>
    </location>
    <ligand>
        <name>heme</name>
        <dbReference type="ChEBI" id="CHEBI:30413"/>
    </ligand>
    <ligandPart>
        <name>Fe</name>
        <dbReference type="ChEBI" id="CHEBI:18248"/>
    </ligandPart>
</feature>
<feature type="strand" evidence="6">
    <location>
        <begin position="21"/>
        <end position="23"/>
    </location>
</feature>
<feature type="helix" evidence="6">
    <location>
        <begin position="45"/>
        <end position="54"/>
    </location>
</feature>
<feature type="strand" evidence="6">
    <location>
        <begin position="67"/>
        <end position="77"/>
    </location>
</feature>
<feature type="turn" evidence="6">
    <location>
        <begin position="82"/>
        <end position="84"/>
    </location>
</feature>
<feature type="helix" evidence="6">
    <location>
        <begin position="88"/>
        <end position="90"/>
    </location>
</feature>
<feature type="strand" evidence="6">
    <location>
        <begin position="96"/>
        <end position="104"/>
    </location>
</feature>
<feature type="strand" evidence="6">
    <location>
        <begin position="116"/>
        <end position="118"/>
    </location>
</feature>
<feature type="strand" evidence="6">
    <location>
        <begin position="121"/>
        <end position="128"/>
    </location>
</feature>
<feature type="strand" evidence="6">
    <location>
        <begin position="131"/>
        <end position="141"/>
    </location>
</feature>
<feature type="helix" evidence="6">
    <location>
        <begin position="148"/>
        <end position="150"/>
    </location>
</feature>
<feature type="helix" evidence="6">
    <location>
        <begin position="151"/>
        <end position="158"/>
    </location>
</feature>
<feature type="turn" evidence="6">
    <location>
        <begin position="162"/>
        <end position="164"/>
    </location>
</feature>
<feature type="helix" evidence="6">
    <location>
        <begin position="169"/>
        <end position="178"/>
    </location>
</feature>
<feature type="helix" evidence="6">
    <location>
        <begin position="180"/>
        <end position="182"/>
    </location>
</feature>
<feature type="helix" evidence="6">
    <location>
        <begin position="183"/>
        <end position="190"/>
    </location>
</feature>
<feature type="helix" evidence="6">
    <location>
        <begin position="192"/>
        <end position="194"/>
    </location>
</feature>
<feature type="strand" evidence="6">
    <location>
        <begin position="195"/>
        <end position="197"/>
    </location>
</feature>
<feature type="strand" evidence="6">
    <location>
        <begin position="210"/>
        <end position="213"/>
    </location>
</feature>
<feature type="strand" evidence="6">
    <location>
        <begin position="219"/>
        <end position="228"/>
    </location>
</feature>
<feature type="helix" evidence="6">
    <location>
        <begin position="237"/>
        <end position="246"/>
    </location>
</feature>
<feature type="helix" evidence="6">
    <location>
        <begin position="250"/>
        <end position="261"/>
    </location>
</feature>
<feature type="strand" evidence="6">
    <location>
        <begin position="266"/>
        <end position="274"/>
    </location>
</feature>
<feature type="helix" evidence="6">
    <location>
        <begin position="276"/>
        <end position="279"/>
    </location>
</feature>
<feature type="turn" evidence="6">
    <location>
        <begin position="295"/>
        <end position="297"/>
    </location>
</feature>
<feature type="strand" evidence="6">
    <location>
        <begin position="301"/>
        <end position="310"/>
    </location>
</feature>
<feature type="helix" evidence="6">
    <location>
        <begin position="315"/>
        <end position="318"/>
    </location>
</feature>
<feature type="turn" evidence="6">
    <location>
        <begin position="319"/>
        <end position="321"/>
    </location>
</feature>
<feature type="strand" evidence="6">
    <location>
        <begin position="333"/>
        <end position="335"/>
    </location>
</feature>
<feature type="helix" evidence="6">
    <location>
        <begin position="339"/>
        <end position="355"/>
    </location>
</feature>
<feature type="helix" evidence="6">
    <location>
        <begin position="360"/>
        <end position="362"/>
    </location>
</feature>
<feature type="helix" evidence="6">
    <location>
        <begin position="364"/>
        <end position="366"/>
    </location>
</feature>
<feature type="turn" evidence="6">
    <location>
        <begin position="388"/>
        <end position="391"/>
    </location>
</feature>
<feature type="strand" evidence="6">
    <location>
        <begin position="420"/>
        <end position="422"/>
    </location>
</feature>
<feature type="strand" evidence="6">
    <location>
        <begin position="425"/>
        <end position="427"/>
    </location>
</feature>
<feature type="helix" evidence="6">
    <location>
        <begin position="433"/>
        <end position="436"/>
    </location>
</feature>
<feature type="helix" evidence="6">
    <location>
        <begin position="437"/>
        <end position="445"/>
    </location>
</feature>
<feature type="helix" evidence="6">
    <location>
        <begin position="452"/>
        <end position="464"/>
    </location>
</feature>
<feature type="helix" evidence="6">
    <location>
        <begin position="469"/>
        <end position="479"/>
    </location>
</feature>
<feature type="turn" evidence="6">
    <location>
        <begin position="480"/>
        <end position="482"/>
    </location>
</feature>
<feature type="helix" evidence="6">
    <location>
        <begin position="484"/>
        <end position="499"/>
    </location>
</feature>
<gene>
    <name type="primary">PXP9</name>
    <name type="synonym">PXP-9</name>
</gene>